<reference key="1">
    <citation type="journal article" date="2004" name="Nature">
        <title>Genome evolution in yeasts.</title>
        <authorList>
            <person name="Dujon B."/>
            <person name="Sherman D."/>
            <person name="Fischer G."/>
            <person name="Durrens P."/>
            <person name="Casaregola S."/>
            <person name="Lafontaine I."/>
            <person name="de Montigny J."/>
            <person name="Marck C."/>
            <person name="Neuveglise C."/>
            <person name="Talla E."/>
            <person name="Goffard N."/>
            <person name="Frangeul L."/>
            <person name="Aigle M."/>
            <person name="Anthouard V."/>
            <person name="Babour A."/>
            <person name="Barbe V."/>
            <person name="Barnay S."/>
            <person name="Blanchin S."/>
            <person name="Beckerich J.-M."/>
            <person name="Beyne E."/>
            <person name="Bleykasten C."/>
            <person name="Boisrame A."/>
            <person name="Boyer J."/>
            <person name="Cattolico L."/>
            <person name="Confanioleri F."/>
            <person name="de Daruvar A."/>
            <person name="Despons L."/>
            <person name="Fabre E."/>
            <person name="Fairhead C."/>
            <person name="Ferry-Dumazet H."/>
            <person name="Groppi A."/>
            <person name="Hantraye F."/>
            <person name="Hennequin C."/>
            <person name="Jauniaux N."/>
            <person name="Joyet P."/>
            <person name="Kachouri R."/>
            <person name="Kerrest A."/>
            <person name="Koszul R."/>
            <person name="Lemaire M."/>
            <person name="Lesur I."/>
            <person name="Ma L."/>
            <person name="Muller H."/>
            <person name="Nicaud J.-M."/>
            <person name="Nikolski M."/>
            <person name="Oztas S."/>
            <person name="Ozier-Kalogeropoulos O."/>
            <person name="Pellenz S."/>
            <person name="Potier S."/>
            <person name="Richard G.-F."/>
            <person name="Straub M.-L."/>
            <person name="Suleau A."/>
            <person name="Swennen D."/>
            <person name="Tekaia F."/>
            <person name="Wesolowski-Louvel M."/>
            <person name="Westhof E."/>
            <person name="Wirth B."/>
            <person name="Zeniou-Meyer M."/>
            <person name="Zivanovic Y."/>
            <person name="Bolotin-Fukuhara M."/>
            <person name="Thierry A."/>
            <person name="Bouchier C."/>
            <person name="Caudron B."/>
            <person name="Scarpelli C."/>
            <person name="Gaillardin C."/>
            <person name="Weissenbach J."/>
            <person name="Wincker P."/>
            <person name="Souciet J.-L."/>
        </authorList>
    </citation>
    <scope>NUCLEOTIDE SEQUENCE [LARGE SCALE GENOMIC DNA]</scope>
    <source>
        <strain>CLIB 122 / E 150</strain>
    </source>
</reference>
<name>MET3_YARLI</name>
<gene>
    <name evidence="1" type="primary">MET3</name>
    <name type="ordered locus">YALI0B08184g</name>
</gene>
<feature type="chain" id="PRO_0000283693" description="Sulfate adenylyltransferase">
    <location>
        <begin position="1"/>
        <end position="572"/>
    </location>
</feature>
<feature type="region of interest" description="N-terminal" evidence="1">
    <location>
        <begin position="1"/>
        <end position="169"/>
    </location>
</feature>
<feature type="region of interest" description="Catalytic" evidence="1">
    <location>
        <begin position="170"/>
        <end position="394"/>
    </location>
</feature>
<feature type="region of interest" description="Allosteric regulation domain; adenylyl-sulfate kinase-like" evidence="1">
    <location>
        <begin position="395"/>
        <end position="572"/>
    </location>
</feature>
<feature type="active site" evidence="1">
    <location>
        <position position="198"/>
    </location>
</feature>
<feature type="active site" evidence="1">
    <location>
        <position position="199"/>
    </location>
</feature>
<feature type="active site" evidence="1">
    <location>
        <position position="200"/>
    </location>
</feature>
<feature type="binding site" evidence="1">
    <location>
        <begin position="197"/>
        <end position="200"/>
    </location>
    <ligand>
        <name>ATP</name>
        <dbReference type="ChEBI" id="CHEBI:30616"/>
    </ligand>
</feature>
<feature type="binding site" evidence="1">
    <location>
        <position position="197"/>
    </location>
    <ligand>
        <name>sulfate</name>
        <dbReference type="ChEBI" id="CHEBI:16189"/>
    </ligand>
</feature>
<feature type="binding site" evidence="1">
    <location>
        <position position="199"/>
    </location>
    <ligand>
        <name>sulfate</name>
        <dbReference type="ChEBI" id="CHEBI:16189"/>
    </ligand>
</feature>
<feature type="binding site" evidence="1">
    <location>
        <begin position="291"/>
        <end position="294"/>
    </location>
    <ligand>
        <name>ATP</name>
        <dbReference type="ChEBI" id="CHEBI:30616"/>
    </ligand>
</feature>
<feature type="binding site" evidence="1">
    <location>
        <position position="295"/>
    </location>
    <ligand>
        <name>sulfate</name>
        <dbReference type="ChEBI" id="CHEBI:16189"/>
    </ligand>
</feature>
<feature type="binding site" evidence="1">
    <location>
        <position position="333"/>
    </location>
    <ligand>
        <name>ATP</name>
        <dbReference type="ChEBI" id="CHEBI:30616"/>
    </ligand>
</feature>
<feature type="binding site" evidence="1">
    <location>
        <begin position="434"/>
        <end position="437"/>
    </location>
    <ligand>
        <name>3'-phosphoadenylyl sulfate</name>
        <dbReference type="ChEBI" id="CHEBI:58339"/>
        <note>allosteric inhibitor</note>
    </ligand>
</feature>
<feature type="binding site" evidence="1">
    <location>
        <position position="451"/>
    </location>
    <ligand>
        <name>3'-phosphoadenylyl sulfate</name>
        <dbReference type="ChEBI" id="CHEBI:58339"/>
        <note>allosteric inhibitor</note>
    </ligand>
</feature>
<feature type="binding site" evidence="1">
    <location>
        <begin position="477"/>
        <end position="478"/>
    </location>
    <ligand>
        <name>3'-phosphoadenylyl sulfate</name>
        <dbReference type="ChEBI" id="CHEBI:58339"/>
        <note>allosteric inhibitor</note>
    </ligand>
</feature>
<feature type="binding site" evidence="1">
    <location>
        <position position="515"/>
    </location>
    <ligand>
        <name>3'-phosphoadenylyl sulfate</name>
        <dbReference type="ChEBI" id="CHEBI:58339"/>
        <note>allosteric inhibitor</note>
    </ligand>
</feature>
<feature type="site" description="Transition state stabilizer" evidence="1">
    <location>
        <position position="203"/>
    </location>
</feature>
<feature type="site" description="Transition state stabilizer" evidence="1">
    <location>
        <position position="206"/>
    </location>
</feature>
<feature type="site" description="Induces change in substrate recognition on ATP binding" evidence="1">
    <location>
        <position position="330"/>
    </location>
</feature>
<comment type="function">
    <text evidence="1">Catalyzes the first intracellular reaction of sulfate assimilation, forming adenosine-5'-phosphosulfate (APS) from inorganic sulfate and ATP. Plays an important role in sulfate activation as a component of the biosynthesis pathway of sulfur-containing amino acids.</text>
</comment>
<comment type="catalytic activity">
    <reaction evidence="1">
        <text>sulfate + ATP + H(+) = adenosine 5'-phosphosulfate + diphosphate</text>
        <dbReference type="Rhea" id="RHEA:18133"/>
        <dbReference type="ChEBI" id="CHEBI:15378"/>
        <dbReference type="ChEBI" id="CHEBI:16189"/>
        <dbReference type="ChEBI" id="CHEBI:30616"/>
        <dbReference type="ChEBI" id="CHEBI:33019"/>
        <dbReference type="ChEBI" id="CHEBI:58243"/>
        <dbReference type="EC" id="2.7.7.4"/>
    </reaction>
</comment>
<comment type="activity regulation">
    <text evidence="1">Allosterically inhibited by 3'-phosphoadenosine 5'-phosphosulfate (PAPS).</text>
</comment>
<comment type="pathway">
    <text evidence="1">Sulfur metabolism; hydrogen sulfide biosynthesis; sulfite from sulfate: step 1/3.</text>
</comment>
<comment type="subunit">
    <text evidence="1">Homohexamer. Dimer of trimers.</text>
</comment>
<comment type="subcellular location">
    <subcellularLocation>
        <location evidence="1">Cytoplasm</location>
    </subcellularLocation>
</comment>
<comment type="domain">
    <text evidence="1">The adenylyl-sulfate kinase (APS kinase) is non-functional. It is involved in allosteric regulation by PAPS. PAPS binding induces a large rotational rearrangement of domains lowering the substrate affinity of the enzyme.</text>
</comment>
<comment type="similarity">
    <text evidence="1">In the N-terminal section; belongs to the sulfate adenylyltransferase family.</text>
</comment>
<comment type="similarity">
    <text evidence="1">In the C-terminal section; belongs to the APS kinase family.</text>
</comment>
<keyword id="KW-0021">Allosteric enzyme</keyword>
<keyword id="KW-0028">Amino-acid biosynthesis</keyword>
<keyword id="KW-0067">ATP-binding</keyword>
<keyword id="KW-0198">Cysteine biosynthesis</keyword>
<keyword id="KW-0963">Cytoplasm</keyword>
<keyword id="KW-0486">Methionine biosynthesis</keyword>
<keyword id="KW-0547">Nucleotide-binding</keyword>
<keyword id="KW-0548">Nucleotidyltransferase</keyword>
<keyword id="KW-1185">Reference proteome</keyword>
<keyword id="KW-0808">Transferase</keyword>
<sequence>MANTPHGGVLKDLLSRDQPIRGELLKESETLASILLSERQLCDLELILSGGFSPLEGFMNEKDYNGVVNDLRLADGALFSMPITLDVSQEDIDELKLKAGGRYTLRDFRDDSPLAIITVDDIYRPDKAVEAKKVFRGDPEHPAVKYLYNTAKEFYVGGKIQAINKLNHYDYVGLRYTPAELRQEFGKLGWNKVVAFQTRNPMHRAHRELTVRAARSRQANVLIHPVVGLTKPGDIDHFTRVRVYQALLPRYPNGMALLGLLPLAMRMGGDREAMWHAIIRKNYGATHFIVGRDHAGPGKNSKGEEFYGPYDAQKLVEKYKDELGIEVVPFQMMTYLPDSDEYMPKDEVPEGTKTLDISGTELRKRLKFGLPIPEWFSYPEVVKVLRESHPPRAKQGFTIFLTGHYNSGKDAIARALQVSLNQQAGRTTTLLLGETVRSELSAELGFSREDRHKNVQRIAFVAAELTRAGSAVIAAPIAPHEAGRKEARETVEQGGNFFLVHVNTPLEYCEATDRKGRFAAAKRGEIKGFTGVDDEYEVPSNADLVVDASQTQVRTIVHQIILLLESQGFFGN</sequence>
<organism>
    <name type="scientific">Yarrowia lipolytica (strain CLIB 122 / E 150)</name>
    <name type="common">Yeast</name>
    <name type="synonym">Candida lipolytica</name>
    <dbReference type="NCBI Taxonomy" id="284591"/>
    <lineage>
        <taxon>Eukaryota</taxon>
        <taxon>Fungi</taxon>
        <taxon>Dikarya</taxon>
        <taxon>Ascomycota</taxon>
        <taxon>Saccharomycotina</taxon>
        <taxon>Dipodascomycetes</taxon>
        <taxon>Dipodascales</taxon>
        <taxon>Dipodascales incertae sedis</taxon>
        <taxon>Yarrowia</taxon>
    </lineage>
</organism>
<accession>Q6CFD2</accession>
<dbReference type="EC" id="2.7.7.4" evidence="1"/>
<dbReference type="EMBL" id="CR382128">
    <property type="protein sequence ID" value="CAG82872.1"/>
    <property type="molecule type" value="Genomic_DNA"/>
</dbReference>
<dbReference type="RefSeq" id="XP_500630.1">
    <property type="nucleotide sequence ID" value="XM_500630.1"/>
</dbReference>
<dbReference type="SMR" id="Q6CFD2"/>
<dbReference type="FunCoup" id="Q6CFD2">
    <property type="interactions" value="589"/>
</dbReference>
<dbReference type="STRING" id="284591.Q6CFD2"/>
<dbReference type="EnsemblFungi" id="CAG82872">
    <property type="protein sequence ID" value="CAG82872"/>
    <property type="gene ID" value="YALI0_B08184g"/>
</dbReference>
<dbReference type="KEGG" id="yli:2907036"/>
<dbReference type="VEuPathDB" id="FungiDB:YALI0_B08184g"/>
<dbReference type="HOGENOM" id="CLU_022950_0_0_1"/>
<dbReference type="InParanoid" id="Q6CFD2"/>
<dbReference type="OMA" id="MEMRYAG"/>
<dbReference type="OrthoDB" id="107631at4891"/>
<dbReference type="UniPathway" id="UPA00140">
    <property type="reaction ID" value="UER00204"/>
</dbReference>
<dbReference type="Proteomes" id="UP000001300">
    <property type="component" value="Chromosome B"/>
</dbReference>
<dbReference type="GO" id="GO:0005737">
    <property type="term" value="C:cytoplasm"/>
    <property type="evidence" value="ECO:0007669"/>
    <property type="project" value="UniProtKB-SubCell"/>
</dbReference>
<dbReference type="GO" id="GO:0004020">
    <property type="term" value="F:adenylylsulfate kinase activity"/>
    <property type="evidence" value="ECO:0007669"/>
    <property type="project" value="InterPro"/>
</dbReference>
<dbReference type="GO" id="GO:0005524">
    <property type="term" value="F:ATP binding"/>
    <property type="evidence" value="ECO:0007669"/>
    <property type="project" value="UniProtKB-KW"/>
</dbReference>
<dbReference type="GO" id="GO:0004781">
    <property type="term" value="F:sulfate adenylyltransferase (ATP) activity"/>
    <property type="evidence" value="ECO:0000318"/>
    <property type="project" value="GO_Central"/>
</dbReference>
<dbReference type="GO" id="GO:0019344">
    <property type="term" value="P:cysteine biosynthetic process"/>
    <property type="evidence" value="ECO:0007669"/>
    <property type="project" value="UniProtKB-KW"/>
</dbReference>
<dbReference type="GO" id="GO:0070814">
    <property type="term" value="P:hydrogen sulfide biosynthetic process"/>
    <property type="evidence" value="ECO:0007669"/>
    <property type="project" value="UniProtKB-UniRule"/>
</dbReference>
<dbReference type="GO" id="GO:0009086">
    <property type="term" value="P:methionine biosynthetic process"/>
    <property type="evidence" value="ECO:0007669"/>
    <property type="project" value="UniProtKB-KW"/>
</dbReference>
<dbReference type="GO" id="GO:0019379">
    <property type="term" value="P:sulfate assimilation, phosphoadenylyl sulfate reduction by phosphoadenylyl-sulfate reductase (thioredoxin)"/>
    <property type="evidence" value="ECO:0000318"/>
    <property type="project" value="GO_Central"/>
</dbReference>
<dbReference type="CDD" id="cd02027">
    <property type="entry name" value="APSK"/>
    <property type="match status" value="1"/>
</dbReference>
<dbReference type="CDD" id="cd00517">
    <property type="entry name" value="ATPS"/>
    <property type="match status" value="1"/>
</dbReference>
<dbReference type="FunFam" id="3.10.400.10:FF:000003">
    <property type="entry name" value="Sulfate adenylyltransferase"/>
    <property type="match status" value="1"/>
</dbReference>
<dbReference type="FunFam" id="3.40.50.300:FF:000802">
    <property type="entry name" value="Sulfate adenylyltransferase"/>
    <property type="match status" value="1"/>
</dbReference>
<dbReference type="FunFam" id="3.40.50.620:FF:000052">
    <property type="entry name" value="Sulfate adenylyltransferase"/>
    <property type="match status" value="1"/>
</dbReference>
<dbReference type="Gene3D" id="3.40.50.620">
    <property type="entry name" value="HUPs"/>
    <property type="match status" value="1"/>
</dbReference>
<dbReference type="Gene3D" id="3.40.50.300">
    <property type="entry name" value="P-loop containing nucleotide triphosphate hydrolases"/>
    <property type="match status" value="1"/>
</dbReference>
<dbReference type="Gene3D" id="3.10.400.10">
    <property type="entry name" value="Sulfate adenylyltransferase"/>
    <property type="match status" value="1"/>
</dbReference>
<dbReference type="HAMAP" id="MF_03106">
    <property type="entry name" value="Sulf_adenylyltr_euk"/>
    <property type="match status" value="1"/>
</dbReference>
<dbReference type="InterPro" id="IPR002891">
    <property type="entry name" value="APS_kinase"/>
</dbReference>
<dbReference type="InterPro" id="IPR025980">
    <property type="entry name" value="ATP-Sase_PUA-like_dom"/>
</dbReference>
<dbReference type="InterPro" id="IPR027417">
    <property type="entry name" value="P-loop_NTPase"/>
</dbReference>
<dbReference type="InterPro" id="IPR015947">
    <property type="entry name" value="PUA-like_sf"/>
</dbReference>
<dbReference type="InterPro" id="IPR014729">
    <property type="entry name" value="Rossmann-like_a/b/a_fold"/>
</dbReference>
<dbReference type="InterPro" id="IPR027535">
    <property type="entry name" value="Sulf_adenylyltr_euk"/>
</dbReference>
<dbReference type="InterPro" id="IPR050512">
    <property type="entry name" value="Sulf_AdTrans/APS_kinase"/>
</dbReference>
<dbReference type="InterPro" id="IPR024951">
    <property type="entry name" value="Sulfurylase_cat_dom"/>
</dbReference>
<dbReference type="InterPro" id="IPR002650">
    <property type="entry name" value="Sulphate_adenylyltransferase"/>
</dbReference>
<dbReference type="NCBIfam" id="TIGR00455">
    <property type="entry name" value="apsK"/>
    <property type="match status" value="1"/>
</dbReference>
<dbReference type="NCBIfam" id="NF004040">
    <property type="entry name" value="PRK05537.1"/>
    <property type="match status" value="1"/>
</dbReference>
<dbReference type="NCBIfam" id="TIGR00339">
    <property type="entry name" value="sopT"/>
    <property type="match status" value="1"/>
</dbReference>
<dbReference type="PANTHER" id="PTHR42700">
    <property type="entry name" value="SULFATE ADENYLYLTRANSFERASE"/>
    <property type="match status" value="1"/>
</dbReference>
<dbReference type="PANTHER" id="PTHR42700:SF1">
    <property type="entry name" value="SULFATE ADENYLYLTRANSFERASE"/>
    <property type="match status" value="1"/>
</dbReference>
<dbReference type="Pfam" id="PF01583">
    <property type="entry name" value="APS_kinase"/>
    <property type="match status" value="1"/>
</dbReference>
<dbReference type="Pfam" id="PF01747">
    <property type="entry name" value="ATP-sulfurylase"/>
    <property type="match status" value="1"/>
</dbReference>
<dbReference type="Pfam" id="PF14306">
    <property type="entry name" value="PUA_2"/>
    <property type="match status" value="1"/>
</dbReference>
<dbReference type="SUPFAM" id="SSF52374">
    <property type="entry name" value="Nucleotidylyl transferase"/>
    <property type="match status" value="1"/>
</dbReference>
<dbReference type="SUPFAM" id="SSF52540">
    <property type="entry name" value="P-loop containing nucleoside triphosphate hydrolases"/>
    <property type="match status" value="1"/>
</dbReference>
<dbReference type="SUPFAM" id="SSF88697">
    <property type="entry name" value="PUA domain-like"/>
    <property type="match status" value="1"/>
</dbReference>
<protein>
    <recommendedName>
        <fullName evidence="1">Sulfate adenylyltransferase</fullName>
        <ecNumber evidence="1">2.7.7.4</ecNumber>
    </recommendedName>
    <alternativeName>
        <fullName evidence="1">ATP-sulfurylase</fullName>
    </alternativeName>
    <alternativeName>
        <fullName evidence="1">Sulfate adenylate transferase</fullName>
        <shortName evidence="1">SAT</shortName>
    </alternativeName>
</protein>
<evidence type="ECO:0000255" key="1">
    <source>
        <dbReference type="HAMAP-Rule" id="MF_03106"/>
    </source>
</evidence>
<proteinExistence type="inferred from homology"/>